<sequence length="383" mass="41582">MKQAFSERISSALTLRKQAGLTRARTVIEQGNQSRLSVDGKSYLNFSGNDYLGLAGSQELTQAWQQGLSLYGSGSGASPLVTGYSKPHADLESQLAEWLGFDCAVLFNSGFSANQAVLFSLLEKGDQVVQDKLNHASLMEAGILSPASMKRFKHNDVAHLDKLLKASICNPSLVVTEGVFSMDGDLSPLSELSRVTKENNAWFMVDDAHGCGVLGSHGRGCCDLYQITPDILVVTFGKAFGLSGAAVLCNVECGDYLSQFARHHVYSTAMPPAQAHALSHALSMIQQQEWRRKKLDELSQQFESELRLCVGVITTQTPIKPIIIGDSETAIALSDSLKEKGMWTTAIRPPTVPLGTARLRVTLSANHSEKDIKLLTQAITELR</sequence>
<comment type="function">
    <text evidence="1">Catalyzes the decarboxylative condensation of pimeloyl-[acyl-carrier protein] and L-alanine to produce 8-amino-7-oxononanoate (AON), [acyl-carrier protein], and carbon dioxide.</text>
</comment>
<comment type="catalytic activity">
    <reaction evidence="1">
        <text>6-carboxyhexanoyl-[ACP] + L-alanine + H(+) = (8S)-8-amino-7-oxononanoate + holo-[ACP] + CO2</text>
        <dbReference type="Rhea" id="RHEA:42288"/>
        <dbReference type="Rhea" id="RHEA-COMP:9685"/>
        <dbReference type="Rhea" id="RHEA-COMP:9955"/>
        <dbReference type="ChEBI" id="CHEBI:15378"/>
        <dbReference type="ChEBI" id="CHEBI:16526"/>
        <dbReference type="ChEBI" id="CHEBI:57972"/>
        <dbReference type="ChEBI" id="CHEBI:64479"/>
        <dbReference type="ChEBI" id="CHEBI:78846"/>
        <dbReference type="ChEBI" id="CHEBI:149468"/>
        <dbReference type="EC" id="2.3.1.47"/>
    </reaction>
</comment>
<comment type="cofactor">
    <cofactor evidence="1">
        <name>pyridoxal 5'-phosphate</name>
        <dbReference type="ChEBI" id="CHEBI:597326"/>
    </cofactor>
</comment>
<comment type="pathway">
    <text evidence="1">Cofactor biosynthesis; biotin biosynthesis.</text>
</comment>
<comment type="subunit">
    <text evidence="1">Homodimer.</text>
</comment>
<comment type="similarity">
    <text evidence="1">Belongs to the class-II pyridoxal-phosphate-dependent aminotransferase family. BioF subfamily.</text>
</comment>
<proteinExistence type="inferred from homology"/>
<reference key="1">
    <citation type="journal article" date="2008" name="BMC Genomics">
        <title>The genome sequence of the fish pathogen Aliivibrio salmonicida strain LFI1238 shows extensive evidence of gene decay.</title>
        <authorList>
            <person name="Hjerde E."/>
            <person name="Lorentzen M.S."/>
            <person name="Holden M.T."/>
            <person name="Seeger K."/>
            <person name="Paulsen S."/>
            <person name="Bason N."/>
            <person name="Churcher C."/>
            <person name="Harris D."/>
            <person name="Norbertczak H."/>
            <person name="Quail M.A."/>
            <person name="Sanders S."/>
            <person name="Thurston S."/>
            <person name="Parkhill J."/>
            <person name="Willassen N.P."/>
            <person name="Thomson N.R."/>
        </authorList>
    </citation>
    <scope>NUCLEOTIDE SEQUENCE [LARGE SCALE GENOMIC DNA]</scope>
    <source>
        <strain>LFI1238</strain>
    </source>
</reference>
<organism>
    <name type="scientific">Aliivibrio salmonicida (strain LFI1238)</name>
    <name type="common">Vibrio salmonicida (strain LFI1238)</name>
    <dbReference type="NCBI Taxonomy" id="316275"/>
    <lineage>
        <taxon>Bacteria</taxon>
        <taxon>Pseudomonadati</taxon>
        <taxon>Pseudomonadota</taxon>
        <taxon>Gammaproteobacteria</taxon>
        <taxon>Vibrionales</taxon>
        <taxon>Vibrionaceae</taxon>
        <taxon>Aliivibrio</taxon>
    </lineage>
</organism>
<protein>
    <recommendedName>
        <fullName evidence="1">8-amino-7-oxononanoate synthase</fullName>
        <shortName evidence="1">AONS</shortName>
        <ecNumber evidence="1">2.3.1.47</ecNumber>
    </recommendedName>
    <alternativeName>
        <fullName evidence="1">7-keto-8-amino-pelargonic acid synthase</fullName>
        <shortName evidence="1">7-KAP synthase</shortName>
        <shortName evidence="1">KAPA synthase</shortName>
    </alternativeName>
    <alternativeName>
        <fullName evidence="1">8-amino-7-ketopelargonate synthase</fullName>
    </alternativeName>
</protein>
<accession>B6ESC6</accession>
<name>BIOF_ALISL</name>
<gene>
    <name evidence="1" type="primary">bioF</name>
    <name type="ordered locus">VSAL_II0859</name>
</gene>
<keyword id="KW-0093">Biotin biosynthesis</keyword>
<keyword id="KW-0663">Pyridoxal phosphate</keyword>
<keyword id="KW-0808">Transferase</keyword>
<evidence type="ECO:0000255" key="1">
    <source>
        <dbReference type="HAMAP-Rule" id="MF_01693"/>
    </source>
</evidence>
<dbReference type="EC" id="2.3.1.47" evidence="1"/>
<dbReference type="EMBL" id="FM178380">
    <property type="protein sequence ID" value="CAQ81613.1"/>
    <property type="molecule type" value="Genomic_DNA"/>
</dbReference>
<dbReference type="RefSeq" id="WP_012552133.1">
    <property type="nucleotide sequence ID" value="NC_011313.1"/>
</dbReference>
<dbReference type="SMR" id="B6ESC6"/>
<dbReference type="KEGG" id="vsa:VSAL_II0859"/>
<dbReference type="eggNOG" id="COG0156">
    <property type="taxonomic scope" value="Bacteria"/>
</dbReference>
<dbReference type="HOGENOM" id="CLU_015846_11_2_6"/>
<dbReference type="UniPathway" id="UPA00078"/>
<dbReference type="Proteomes" id="UP000001730">
    <property type="component" value="Chromosome 2"/>
</dbReference>
<dbReference type="GO" id="GO:0008710">
    <property type="term" value="F:8-amino-7-oxononanoate synthase activity"/>
    <property type="evidence" value="ECO:0007669"/>
    <property type="project" value="UniProtKB-UniRule"/>
</dbReference>
<dbReference type="GO" id="GO:0030170">
    <property type="term" value="F:pyridoxal phosphate binding"/>
    <property type="evidence" value="ECO:0007669"/>
    <property type="project" value="UniProtKB-UniRule"/>
</dbReference>
<dbReference type="GO" id="GO:0009102">
    <property type="term" value="P:biotin biosynthetic process"/>
    <property type="evidence" value="ECO:0007669"/>
    <property type="project" value="UniProtKB-UniRule"/>
</dbReference>
<dbReference type="CDD" id="cd06454">
    <property type="entry name" value="KBL_like"/>
    <property type="match status" value="1"/>
</dbReference>
<dbReference type="Gene3D" id="3.90.1150.10">
    <property type="entry name" value="Aspartate Aminotransferase, domain 1"/>
    <property type="match status" value="1"/>
</dbReference>
<dbReference type="Gene3D" id="3.40.640.10">
    <property type="entry name" value="Type I PLP-dependent aspartate aminotransferase-like (Major domain)"/>
    <property type="match status" value="1"/>
</dbReference>
<dbReference type="HAMAP" id="MF_01693">
    <property type="entry name" value="BioF_aminotrans_2"/>
    <property type="match status" value="1"/>
</dbReference>
<dbReference type="InterPro" id="IPR001917">
    <property type="entry name" value="Aminotrans_II_pyridoxalP_BS"/>
</dbReference>
<dbReference type="InterPro" id="IPR004839">
    <property type="entry name" value="Aminotransferase_I/II_large"/>
</dbReference>
<dbReference type="InterPro" id="IPR050087">
    <property type="entry name" value="AON_synthase_class-II"/>
</dbReference>
<dbReference type="InterPro" id="IPR004723">
    <property type="entry name" value="AONS_Archaea/Proteobacteria"/>
</dbReference>
<dbReference type="InterPro" id="IPR022834">
    <property type="entry name" value="AONS_Proteobacteria"/>
</dbReference>
<dbReference type="InterPro" id="IPR015424">
    <property type="entry name" value="PyrdxlP-dep_Trfase"/>
</dbReference>
<dbReference type="InterPro" id="IPR015421">
    <property type="entry name" value="PyrdxlP-dep_Trfase_major"/>
</dbReference>
<dbReference type="InterPro" id="IPR015422">
    <property type="entry name" value="PyrdxlP-dep_Trfase_small"/>
</dbReference>
<dbReference type="NCBIfam" id="TIGR00858">
    <property type="entry name" value="bioF"/>
    <property type="match status" value="1"/>
</dbReference>
<dbReference type="PANTHER" id="PTHR13693:SF100">
    <property type="entry name" value="8-AMINO-7-OXONONANOATE SYNTHASE"/>
    <property type="match status" value="1"/>
</dbReference>
<dbReference type="PANTHER" id="PTHR13693">
    <property type="entry name" value="CLASS II AMINOTRANSFERASE/8-AMINO-7-OXONONANOATE SYNTHASE"/>
    <property type="match status" value="1"/>
</dbReference>
<dbReference type="Pfam" id="PF00155">
    <property type="entry name" value="Aminotran_1_2"/>
    <property type="match status" value="1"/>
</dbReference>
<dbReference type="SUPFAM" id="SSF53383">
    <property type="entry name" value="PLP-dependent transferases"/>
    <property type="match status" value="1"/>
</dbReference>
<dbReference type="PROSITE" id="PS00599">
    <property type="entry name" value="AA_TRANSFER_CLASS_2"/>
    <property type="match status" value="1"/>
</dbReference>
<feature type="chain" id="PRO_0000380891" description="8-amino-7-oxononanoate synthase">
    <location>
        <begin position="1"/>
        <end position="383"/>
    </location>
</feature>
<feature type="binding site" evidence="1">
    <location>
        <position position="23"/>
    </location>
    <ligand>
        <name>substrate</name>
    </ligand>
</feature>
<feature type="binding site" evidence="1">
    <location>
        <begin position="110"/>
        <end position="111"/>
    </location>
    <ligand>
        <name>pyridoxal 5'-phosphate</name>
        <dbReference type="ChEBI" id="CHEBI:597326"/>
    </ligand>
</feature>
<feature type="binding site" evidence="1">
    <location>
        <position position="135"/>
    </location>
    <ligand>
        <name>substrate</name>
    </ligand>
</feature>
<feature type="binding site" evidence="1">
    <location>
        <position position="181"/>
    </location>
    <ligand>
        <name>pyridoxal 5'-phosphate</name>
        <dbReference type="ChEBI" id="CHEBI:597326"/>
    </ligand>
</feature>
<feature type="binding site" evidence="1">
    <location>
        <position position="209"/>
    </location>
    <ligand>
        <name>pyridoxal 5'-phosphate</name>
        <dbReference type="ChEBI" id="CHEBI:597326"/>
    </ligand>
</feature>
<feature type="binding site" evidence="1">
    <location>
        <position position="235"/>
    </location>
    <ligand>
        <name>pyridoxal 5'-phosphate</name>
        <dbReference type="ChEBI" id="CHEBI:597326"/>
    </ligand>
</feature>
<feature type="binding site" evidence="1">
    <location>
        <position position="351"/>
    </location>
    <ligand>
        <name>substrate</name>
    </ligand>
</feature>
<feature type="modified residue" description="N6-(pyridoxal phosphate)lysine" evidence="1">
    <location>
        <position position="238"/>
    </location>
</feature>